<feature type="transit peptide" description="Mitochondrion" evidence="2">
    <location>
        <begin position="1"/>
        <end position="24"/>
    </location>
</feature>
<feature type="chain" id="PRO_0000251469" description="Complex I intermediate-associated protein 30, mitochondrial">
    <location>
        <begin position="25"/>
        <end position="327"/>
    </location>
</feature>
<feature type="region of interest" description="Disordered" evidence="3">
    <location>
        <begin position="42"/>
        <end position="63"/>
    </location>
</feature>
<feature type="compositionally biased region" description="Basic and acidic residues" evidence="3">
    <location>
        <begin position="53"/>
        <end position="63"/>
    </location>
</feature>
<feature type="modified residue" description="Phosphoserine" evidence="1">
    <location>
        <position position="318"/>
    </location>
</feature>
<comment type="function">
    <text evidence="1">As part of the MCIA complex, involved in the assembly of the mitochondrial complex I.</text>
</comment>
<comment type="subunit">
    <text evidence="1">Part of the mitochondrial complex I assembly/MCIA complex that comprises at least the core subunits TMEM126B, NDUFAF1, ECSIT and ACAD9 and complement subunits such as COA1 and TMEM186. Interacts with ECSIT. Interacts with ACAD9. At early stages of complex I assembly, it is found in intermediate subcomplexes that contain different subunits including NDUFB6, NDUFA6, NDUFA9, NDUFS3, NDUFS7, ND1, ND2 and ND3. Interacts with TMEM70 and TMEM242 (By similarity).</text>
</comment>
<comment type="subcellular location">
    <subcellularLocation>
        <location evidence="1">Mitochondrion</location>
    </subcellularLocation>
    <subcellularLocation>
        <location evidence="1">Mitochondrion matrix</location>
    </subcellularLocation>
    <text evidence="1">Periferally associated with the matrix face of the mitochondrial inner membrane.</text>
</comment>
<comment type="similarity">
    <text evidence="4">Belongs to the CIA30 family.</text>
</comment>
<protein>
    <recommendedName>
        <fullName evidence="1">Complex I intermediate-associated protein 30, mitochondrial</fullName>
    </recommendedName>
    <alternativeName>
        <fullName>NADH dehydrogenase [ubiquinone] 1 alpha subcomplex assembly factor 1</fullName>
    </alternativeName>
</protein>
<proteinExistence type="evidence at transcript level"/>
<reference key="1">
    <citation type="journal article" date="2006" name="Gene">
        <title>Adaptive selection of mitochondrial complex I subunits during primate radiation.</title>
        <authorList>
            <person name="Mishmar D."/>
            <person name="Ruiz-Pesini E."/>
            <person name="Mondragon-Palomino M."/>
            <person name="Procaccio V."/>
            <person name="Gaut B."/>
            <person name="Wallace D.C."/>
        </authorList>
    </citation>
    <scope>NUCLEOTIDE SEQUENCE [MRNA]</scope>
</reference>
<evidence type="ECO:0000250" key="1">
    <source>
        <dbReference type="UniProtKB" id="Q9Y375"/>
    </source>
</evidence>
<evidence type="ECO:0000255" key="2"/>
<evidence type="ECO:0000256" key="3">
    <source>
        <dbReference type="SAM" id="MobiDB-lite"/>
    </source>
</evidence>
<evidence type="ECO:0000305" key="4"/>
<name>CIA30_PANTR</name>
<keyword id="KW-0143">Chaperone</keyword>
<keyword id="KW-0496">Mitochondrion</keyword>
<keyword id="KW-0597">Phosphoprotein</keyword>
<keyword id="KW-1185">Reference proteome</keyword>
<keyword id="KW-0809">Transit peptide</keyword>
<dbReference type="EMBL" id="DQ885750">
    <property type="protein sequence ID" value="ABH12259.1"/>
    <property type="molecule type" value="mRNA"/>
</dbReference>
<dbReference type="RefSeq" id="NP_001073392.1">
    <property type="nucleotide sequence ID" value="NM_001079923.1"/>
</dbReference>
<dbReference type="FunCoup" id="Q0MQ84">
    <property type="interactions" value="992"/>
</dbReference>
<dbReference type="STRING" id="9598.ENSPTRP00000011848"/>
<dbReference type="PaxDb" id="9598-ENSPTRP00000011848"/>
<dbReference type="GeneID" id="739838"/>
<dbReference type="KEGG" id="ptr:739838"/>
<dbReference type="CTD" id="51103"/>
<dbReference type="eggNOG" id="KOG2435">
    <property type="taxonomic scope" value="Eukaryota"/>
</dbReference>
<dbReference type="InParanoid" id="Q0MQ84"/>
<dbReference type="OrthoDB" id="11914at9604"/>
<dbReference type="Proteomes" id="UP000002277">
    <property type="component" value="Unplaced"/>
</dbReference>
<dbReference type="GO" id="GO:0005759">
    <property type="term" value="C:mitochondrial matrix"/>
    <property type="evidence" value="ECO:0007669"/>
    <property type="project" value="UniProtKB-SubCell"/>
</dbReference>
<dbReference type="GO" id="GO:0005739">
    <property type="term" value="C:mitochondrion"/>
    <property type="evidence" value="ECO:0000250"/>
    <property type="project" value="UniProtKB"/>
</dbReference>
<dbReference type="GO" id="GO:0051082">
    <property type="term" value="F:unfolded protein binding"/>
    <property type="evidence" value="ECO:0000318"/>
    <property type="project" value="GO_Central"/>
</dbReference>
<dbReference type="GO" id="GO:0006120">
    <property type="term" value="P:mitochondrial electron transport, NADH to ubiquinone"/>
    <property type="evidence" value="ECO:0000318"/>
    <property type="project" value="GO_Central"/>
</dbReference>
<dbReference type="GO" id="GO:0032981">
    <property type="term" value="P:mitochondrial respiratory chain complex I assembly"/>
    <property type="evidence" value="ECO:0000250"/>
    <property type="project" value="UniProtKB"/>
</dbReference>
<dbReference type="Gene3D" id="2.60.120.430">
    <property type="entry name" value="Galactose-binding lectin"/>
    <property type="match status" value="1"/>
</dbReference>
<dbReference type="InterPro" id="IPR008979">
    <property type="entry name" value="Galactose-bd-like_sf"/>
</dbReference>
<dbReference type="InterPro" id="IPR013857">
    <property type="entry name" value="NADH-UbQ_OxRdtase-assoc_prot30"/>
</dbReference>
<dbReference type="InterPro" id="IPR039131">
    <property type="entry name" value="NDUFAF1"/>
</dbReference>
<dbReference type="PANTHER" id="PTHR13194">
    <property type="entry name" value="COMPLEX I INTERMEDIATE-ASSOCIATED PROTEIN 30"/>
    <property type="match status" value="1"/>
</dbReference>
<dbReference type="PANTHER" id="PTHR13194:SF23">
    <property type="entry name" value="COMPLEX I INTERMEDIATE-ASSOCIATED PROTEIN 30, MITOCHONDRIAL"/>
    <property type="match status" value="1"/>
</dbReference>
<dbReference type="Pfam" id="PF08547">
    <property type="entry name" value="CIA30"/>
    <property type="match status" value="1"/>
</dbReference>
<dbReference type="SUPFAM" id="SSF49785">
    <property type="entry name" value="Galactose-binding domain-like"/>
    <property type="match status" value="1"/>
</dbReference>
<organism>
    <name type="scientific">Pan troglodytes</name>
    <name type="common">Chimpanzee</name>
    <dbReference type="NCBI Taxonomy" id="9598"/>
    <lineage>
        <taxon>Eukaryota</taxon>
        <taxon>Metazoa</taxon>
        <taxon>Chordata</taxon>
        <taxon>Craniata</taxon>
        <taxon>Vertebrata</taxon>
        <taxon>Euteleostomi</taxon>
        <taxon>Mammalia</taxon>
        <taxon>Eutheria</taxon>
        <taxon>Euarchontoglires</taxon>
        <taxon>Primates</taxon>
        <taxon>Haplorrhini</taxon>
        <taxon>Catarrhini</taxon>
        <taxon>Hominidae</taxon>
        <taxon>Pan</taxon>
    </lineage>
</organism>
<gene>
    <name evidence="1" type="primary">NDUFAF1</name>
</gene>
<accession>Q0MQ84</accession>
<sequence>MALVHKLLRGTYFLRKFXKPTSALYPFLGIRFAEYSSSLQKPVASPGKASSQRKTEGDLQGDHQKEVALDITSSEEKPDVSFDKAIRDEAMYHFRHLKDEIVDHWRGPEGHPLHEVLLEQAKVVWQFRGKEDLDKWTVTSDKTIGGRSEVFLKMGKNNQSALLYGTLSSEAPQDGESTRSGYCAMISRIPRGAFERKMSYDWSQFNTLYLRVRGDGRPWMVNIKEDTDFFQRTNQMYSYFMFTRGGPYWQEVKIPFSKFFFSNRGRIRDVQHELPLDKISSIGFTLADKVDGPFFLEIDFIGVFTDPAHTEEFAYENSPELNPRLFK</sequence>